<organism>
    <name type="scientific">Caenorhabditis elegans</name>
    <dbReference type="NCBI Taxonomy" id="6239"/>
    <lineage>
        <taxon>Eukaryota</taxon>
        <taxon>Metazoa</taxon>
        <taxon>Ecdysozoa</taxon>
        <taxon>Nematoda</taxon>
        <taxon>Chromadorea</taxon>
        <taxon>Rhabditida</taxon>
        <taxon>Rhabditina</taxon>
        <taxon>Rhabditomorpha</taxon>
        <taxon>Rhabditoidea</taxon>
        <taxon>Rhabditidae</taxon>
        <taxon>Peloderinae</taxon>
        <taxon>Caenorhabditis</taxon>
    </lineage>
</organism>
<comment type="subcellular location">
    <subcellularLocation>
        <location evidence="4">Membrane</location>
        <topology evidence="4">Single-pass type II membrane protein</topology>
    </subcellularLocation>
</comment>
<comment type="similarity">
    <text evidence="4">Belongs to the UPF0376 family.</text>
</comment>
<name>U376D_CAEEL</name>
<dbReference type="EMBL" id="FO080796">
    <property type="protein sequence ID" value="CCD66864.1"/>
    <property type="molecule type" value="Genomic_DNA"/>
</dbReference>
<dbReference type="PIR" id="D88990">
    <property type="entry name" value="D88990"/>
</dbReference>
<dbReference type="RefSeq" id="NP_503869.2">
    <property type="nucleotide sequence ID" value="NM_071468.2"/>
</dbReference>
<dbReference type="SMR" id="O16406"/>
<dbReference type="BioGRID" id="48098">
    <property type="interactions" value="1"/>
</dbReference>
<dbReference type="FunCoup" id="O16406">
    <property type="interactions" value="126"/>
</dbReference>
<dbReference type="iPTMnet" id="O16406"/>
<dbReference type="PaxDb" id="6239-C36C5.12"/>
<dbReference type="PeptideAtlas" id="O16406"/>
<dbReference type="EnsemblMetazoa" id="C36C5.12.1">
    <property type="protein sequence ID" value="C36C5.12.1"/>
    <property type="gene ID" value="WBGene00016481"/>
</dbReference>
<dbReference type="EnsemblMetazoa" id="C36C5.12.2">
    <property type="protein sequence ID" value="C36C5.12.2"/>
    <property type="gene ID" value="WBGene00016481"/>
</dbReference>
<dbReference type="GeneID" id="183268"/>
<dbReference type="KEGG" id="cel:CELE_C36C5.12"/>
<dbReference type="UCSC" id="C36C5.12">
    <property type="organism name" value="c. elegans"/>
</dbReference>
<dbReference type="AGR" id="WB:WBGene00016481"/>
<dbReference type="CTD" id="183268"/>
<dbReference type="WormBase" id="C36C5.12">
    <property type="protein sequence ID" value="CE51178"/>
    <property type="gene ID" value="WBGene00016481"/>
</dbReference>
<dbReference type="eggNOG" id="ENOG502THJ5">
    <property type="taxonomic scope" value="Eukaryota"/>
</dbReference>
<dbReference type="GeneTree" id="ENSGT00970000195826"/>
<dbReference type="HOGENOM" id="CLU_078890_1_0_1"/>
<dbReference type="InParanoid" id="O16406"/>
<dbReference type="OMA" id="EHMNTIC"/>
<dbReference type="OrthoDB" id="5804752at2759"/>
<dbReference type="PhylomeDB" id="O16406"/>
<dbReference type="PRO" id="PR:O16406"/>
<dbReference type="Proteomes" id="UP000001940">
    <property type="component" value="Chromosome V"/>
</dbReference>
<dbReference type="Bgee" id="WBGene00016481">
    <property type="expression patterns" value="Expressed in adult organism and 1 other cell type or tissue"/>
</dbReference>
<dbReference type="GO" id="GO:0016020">
    <property type="term" value="C:membrane"/>
    <property type="evidence" value="ECO:0007669"/>
    <property type="project" value="UniProtKB-SubCell"/>
</dbReference>
<dbReference type="InterPro" id="IPR002542">
    <property type="entry name" value="T20D4.11-like_dom"/>
</dbReference>
<dbReference type="InterPro" id="IPR016638">
    <property type="entry name" value="UPF0376"/>
</dbReference>
<dbReference type="PANTHER" id="PTHR21453:SF28">
    <property type="entry name" value="DUF19 DOMAIN-CONTAINING PROTEIN-RELATED"/>
    <property type="match status" value="1"/>
</dbReference>
<dbReference type="PANTHER" id="PTHR21453">
    <property type="entry name" value="DUF19 DOMAIN-CONTAINING PROTEIN-RELATED-RELATED"/>
    <property type="match status" value="1"/>
</dbReference>
<dbReference type="Pfam" id="PF01579">
    <property type="entry name" value="DUF19"/>
    <property type="match status" value="1"/>
</dbReference>
<dbReference type="PIRSF" id="PIRSF015697">
    <property type="entry name" value="UCP015697"/>
    <property type="match status" value="1"/>
</dbReference>
<feature type="chain" id="PRO_0000248558" description="UPF0376 protein C36C5.12">
    <location>
        <begin position="1"/>
        <end position="219"/>
    </location>
</feature>
<feature type="topological domain" description="Cytoplasmic" evidence="1">
    <location>
        <begin position="1"/>
        <end position="20"/>
    </location>
</feature>
<feature type="transmembrane region" description="Helical; Signal-anchor for type II membrane protein" evidence="1">
    <location>
        <begin position="21"/>
        <end position="43"/>
    </location>
</feature>
<feature type="topological domain" description="Extracellular" evidence="1">
    <location>
        <begin position="44"/>
        <end position="219"/>
    </location>
</feature>
<feature type="glycosylation site" description="N-linked (GlcNAc...) asparagine" evidence="2 3">
    <location>
        <position position="104"/>
    </location>
</feature>
<feature type="glycosylation site" description="N-linked (GlcNAc...) asparagine" evidence="1">
    <location>
        <position position="204"/>
    </location>
</feature>
<accession>O16406</accession>
<reference key="1">
    <citation type="journal article" date="1998" name="Science">
        <title>Genome sequence of the nematode C. elegans: a platform for investigating biology.</title>
        <authorList>
            <consortium name="The C. elegans sequencing consortium"/>
        </authorList>
    </citation>
    <scope>NUCLEOTIDE SEQUENCE [LARGE SCALE GENOMIC DNA]</scope>
    <source>
        <strain>Bristol N2</strain>
    </source>
</reference>
<reference key="2">
    <citation type="journal article" date="2003" name="Nat. Biotechnol.">
        <title>Lectin affinity capture, isotope-coded tagging and mass spectrometry to identify N-linked glycoproteins.</title>
        <authorList>
            <person name="Kaji H."/>
            <person name="Saito H."/>
            <person name="Yamauchi Y."/>
            <person name="Shinkawa T."/>
            <person name="Taoka M."/>
            <person name="Hirabayashi J."/>
            <person name="Kasai K."/>
            <person name="Takahashi N."/>
            <person name="Isobe T."/>
        </authorList>
    </citation>
    <scope>GLYCOSYLATION [LARGE SCALE ANALYSIS] AT ASN-104</scope>
    <scope>IDENTIFICATION BY MASS SPECTROMETRY</scope>
    <source>
        <strain>Bristol N2</strain>
    </source>
</reference>
<reference key="3">
    <citation type="journal article" date="2007" name="Mol. Cell. Proteomics">
        <title>Proteomics reveals N-linked glycoprotein diversity in Caenorhabditis elegans and suggests an atypical translocation mechanism for integral membrane proteins.</title>
        <authorList>
            <person name="Kaji H."/>
            <person name="Kamiie J."/>
            <person name="Kawakami H."/>
            <person name="Kido K."/>
            <person name="Yamauchi Y."/>
            <person name="Shinkawa T."/>
            <person name="Taoka M."/>
            <person name="Takahashi N."/>
            <person name="Isobe T."/>
        </authorList>
    </citation>
    <scope>GLYCOSYLATION [LARGE SCALE ANALYSIS] AT ASN-104</scope>
    <scope>IDENTIFICATION BY MASS SPECTROMETRY</scope>
    <source>
        <strain>Bristol N2</strain>
    </source>
</reference>
<protein>
    <recommendedName>
        <fullName>UPF0376 protein C36C5.12</fullName>
    </recommendedName>
</protein>
<sequence length="219" mass="25309">MGRLDVKNSWIEFHQDEMTSFLKLAIIGTVLLGVAHGANLTAAEKETYCELRSAIQTFLCIERLRDFAAKVDELDMDKKSELKEFKKTCDSLKNCFAITRCGPNSTMDEAELFRMVEKNCEAVVYIHEDFSDCSDKLTAKKSVCFDNWDPIPDGIHLEEDEKKVEKMKKETCKRYFGKDDCMKKEIVETCSQKEWDKFREQFINLSSDLVSKCDFSRLG</sequence>
<evidence type="ECO:0000255" key="1"/>
<evidence type="ECO:0000269" key="2">
    <source>
    </source>
</evidence>
<evidence type="ECO:0000269" key="3">
    <source>
    </source>
</evidence>
<evidence type="ECO:0000305" key="4"/>
<keyword id="KW-0325">Glycoprotein</keyword>
<keyword id="KW-0472">Membrane</keyword>
<keyword id="KW-1185">Reference proteome</keyword>
<keyword id="KW-0735">Signal-anchor</keyword>
<keyword id="KW-0812">Transmembrane</keyword>
<keyword id="KW-1133">Transmembrane helix</keyword>
<gene>
    <name type="ORF">C36C5.12</name>
</gene>
<proteinExistence type="evidence at protein level"/>